<feature type="chain" id="PRO_0000453879" description="DNA-directed RNA polymerase subunit Rpo12">
    <location>
        <begin position="1"/>
        <end position="48"/>
    </location>
</feature>
<feature type="binding site" evidence="1 2 7 8 10 11">
    <location>
        <position position="9"/>
    </location>
    <ligand>
        <name>Zn(2+)</name>
        <dbReference type="ChEBI" id="CHEBI:29105"/>
    </ligand>
</feature>
<feature type="binding site" evidence="2 7 8 9 10 11">
    <location>
        <position position="12"/>
    </location>
    <ligand>
        <name>Zn(2+)</name>
        <dbReference type="ChEBI" id="CHEBI:29105"/>
    </ligand>
</feature>
<feature type="binding site" evidence="1 2 7 8 9 10 11">
    <location>
        <position position="26"/>
    </location>
    <ligand>
        <name>Zn(2+)</name>
        <dbReference type="ChEBI" id="CHEBI:29105"/>
    </ligand>
</feature>
<feature type="binding site" evidence="1 2 7 8 9 10 11">
    <location>
        <position position="29"/>
    </location>
    <ligand>
        <name>Zn(2+)</name>
        <dbReference type="ChEBI" id="CHEBI:29105"/>
    </ligand>
</feature>
<feature type="turn" evidence="12">
    <location>
        <begin position="9"/>
        <end position="12"/>
    </location>
</feature>
<feature type="strand" evidence="12">
    <location>
        <begin position="22"/>
        <end position="24"/>
    </location>
</feature>
<feature type="turn" evidence="12">
    <location>
        <begin position="27"/>
        <end position="29"/>
    </location>
</feature>
<feature type="strand" evidence="12">
    <location>
        <begin position="43"/>
        <end position="46"/>
    </location>
</feature>
<comment type="function">
    <text evidence="1">DNA-dependent RNA polymerase (RNAP) catalyzes the transcription of DNA into RNA using the four ribonucleoside triphosphates as substrates.</text>
</comment>
<comment type="catalytic activity">
    <reaction evidence="1">
        <text>RNA(n) + a ribonucleoside 5'-triphosphate = RNA(n+1) + diphosphate</text>
        <dbReference type="Rhea" id="RHEA:21248"/>
        <dbReference type="Rhea" id="RHEA-COMP:14527"/>
        <dbReference type="Rhea" id="RHEA-COMP:17342"/>
        <dbReference type="ChEBI" id="CHEBI:33019"/>
        <dbReference type="ChEBI" id="CHEBI:61557"/>
        <dbReference type="ChEBI" id="CHEBI:140395"/>
        <dbReference type="EC" id="2.7.7.6"/>
    </reaction>
</comment>
<comment type="cofactor">
    <cofactor evidence="1 2 7 8 9 10 11">
        <name>Zn(2+)</name>
        <dbReference type="ChEBI" id="CHEBI:29105"/>
    </cofactor>
    <text evidence="1 2 7 8 9 10 11">Binds 1 zinc ion.</text>
</comment>
<comment type="subunit">
    <text evidence="2 3 4">Part of the 13-subunit RNA polymerase complex.</text>
</comment>
<comment type="subcellular location">
    <subcellularLocation>
        <location evidence="1 4">Cytoplasm</location>
    </subcellularLocation>
</comment>
<comment type="similarity">
    <text evidence="1">Belongs to the archaeal Rpo12/eukaryotic RPC10 RNA polymerase subunit family.</text>
</comment>
<reference evidence="7 8" key="1">
    <citation type="journal article" date="2009" name="PLoS Biol.">
        <title>Evolution of complex RNA polymerases: the complete archaeal RNA polymerase structure.</title>
        <authorList>
            <person name="Korkhin Y."/>
            <person name="Unligil U.M."/>
            <person name="Littlefield O."/>
            <person name="Nelson P.J."/>
            <person name="Stuart D.I."/>
            <person name="Sigler P.B."/>
            <person name="Bell S.D."/>
            <person name="Abrescia N.G."/>
        </authorList>
    </citation>
    <scope>NUCLEOTIDE SEQUENCE [GENOMIC DNA]</scope>
    <scope>X-RAY CRYSTALLOGRAPHY (3.52 ANGSTROMS) OF THE RNA POLYMERASE COMPLEX IN COMPLEX WITH ZINC</scope>
    <scope>COFACTOR</scope>
    <scope>SUBUNIT</scope>
    <scope>NOMENCLATURE</scope>
    <source>
        <strain>ATCC 51178 / DSM 5389 / JCM 8931 / NBRC 15437 / B12</strain>
    </source>
</reference>
<reference evidence="6" key="2">
    <citation type="journal article" date="2021" name="Environ. Microbiol.">
        <title>New insights into the diversity and evolution of the archaeal mobilome from three complete genomes of Saccharolobus shibatae.</title>
        <authorList>
            <person name="Medvedeva S."/>
            <person name="Brandt D."/>
            <person name="Cvirkaite-Krupovic V."/>
            <person name="Liu Y."/>
            <person name="Severinov K."/>
            <person name="Ishino S."/>
            <person name="Ishino Y."/>
            <person name="Prangishvili D."/>
            <person name="Kalinowski J."/>
            <person name="Krupovic M."/>
        </authorList>
    </citation>
    <scope>NUCLEOTIDE SEQUENCE [LARGE SCALE GENOMIC DNA]</scope>
    <source>
        <strain>ATCC 51178 / DSM 5389 / JCM 8931 / NBRC 15437 / B12</strain>
    </source>
</reference>
<reference evidence="9" key="3">
    <citation type="journal article" date="2011" name="Biochem. Soc. Trans.">
        <title>Archaeal RNA polymerase: the influence of the protruding stalk in crystal packing and preliminary biophysical analysis of the Rpo13 subunit.</title>
        <authorList>
            <person name="Wojtas M."/>
            <person name="Peralta B."/>
            <person name="Ondiviela M."/>
            <person name="Mogni M."/>
            <person name="Bell S.D."/>
            <person name="Abrescia N.G."/>
        </authorList>
    </citation>
    <scope>X-RAY CRYSTALLOGRAPHY (3.80 ANGSTROMS) OF THE RNA POLYMERASE COMPLEX IN COMPLEX WITH ZINC</scope>
    <scope>COFACTOR</scope>
    <scope>SUBUNIT</scope>
    <source>
        <strain>ATCC 51178 / DSM 5389 / JCM 8931 / NBRC 15437 / B12</strain>
    </source>
</reference>
<reference evidence="10 11" key="4">
    <citation type="journal article" date="2012" name="Nucleic Acids Res.">
        <title>Structural and functional analyses of the interaction of archaeal RNA polymerase with DNA.</title>
        <authorList>
            <person name="Wojtas M.N."/>
            <person name="Mogni M."/>
            <person name="Millet O."/>
            <person name="Bell S.D."/>
            <person name="Abrescia N.G."/>
        </authorList>
    </citation>
    <scope>X-RAY CRYSTALLOGRAPHY (3.20 ANGSTROMS) OF THE RNA POLYMERASE COMPLEX IN COMPLEX WITH ZINC WITH AND WITHOUT DNA</scope>
    <scope>COFACTOR</scope>
    <scope>SUBUNIT</scope>
    <scope>SUBCELLULAR LOCATION</scope>
    <source>
        <strain>ATCC 51178 / DSM 5389 / JCM 8931 / NBRC 15437 / B12</strain>
    </source>
</reference>
<proteinExistence type="evidence at protein level"/>
<accession>B8YB64</accession>
<accession>A0A8F5BRG8</accession>
<dbReference type="EC" id="2.7.7.6" evidence="1"/>
<dbReference type="EMBL" id="FJ515676">
    <property type="protein sequence ID" value="ACL36499.1"/>
    <property type="molecule type" value="Genomic_DNA"/>
</dbReference>
<dbReference type="EMBL" id="CP077717">
    <property type="protein sequence ID" value="QXJ30102.1"/>
    <property type="molecule type" value="Genomic_DNA"/>
</dbReference>
<dbReference type="RefSeq" id="WP_009988725.1">
    <property type="nucleotide sequence ID" value="NZ_CP077717.1"/>
</dbReference>
<dbReference type="PDB" id="2WAQ">
    <property type="method" value="X-ray"/>
    <property type="resolution" value="3.35 A"/>
    <property type="chains" value="P=6-48"/>
</dbReference>
<dbReference type="PDB" id="2WB1">
    <property type="method" value="X-ray"/>
    <property type="resolution" value="3.52 A"/>
    <property type="chains" value="P/X=1-48"/>
</dbReference>
<dbReference type="PDB" id="2Y0S">
    <property type="method" value="X-ray"/>
    <property type="resolution" value="3.80 A"/>
    <property type="chains" value="P/X=1-48"/>
</dbReference>
<dbReference type="PDB" id="4AYB">
    <property type="method" value="X-ray"/>
    <property type="resolution" value="3.20 A"/>
    <property type="chains" value="P=1-48"/>
</dbReference>
<dbReference type="PDB" id="4V8S">
    <property type="method" value="X-ray"/>
    <property type="resolution" value="4.32 A"/>
    <property type="chains" value="AX/BP=1-48"/>
</dbReference>
<dbReference type="PDBsum" id="2WAQ"/>
<dbReference type="PDBsum" id="2WB1"/>
<dbReference type="PDBsum" id="2Y0S"/>
<dbReference type="PDBsum" id="4AYB"/>
<dbReference type="PDBsum" id="4V8S"/>
<dbReference type="SMR" id="B8YB64"/>
<dbReference type="KEGG" id="sshi:J5U23_02993"/>
<dbReference type="OrthoDB" id="129238at2157"/>
<dbReference type="BRENDA" id="2.7.7.6">
    <property type="organism ID" value="6162"/>
</dbReference>
<dbReference type="EvolutionaryTrace" id="B8YB64"/>
<dbReference type="Proteomes" id="UP000694018">
    <property type="component" value="Chromosome"/>
</dbReference>
<dbReference type="GO" id="GO:0005737">
    <property type="term" value="C:cytoplasm"/>
    <property type="evidence" value="ECO:0007669"/>
    <property type="project" value="UniProtKB-SubCell"/>
</dbReference>
<dbReference type="GO" id="GO:0000428">
    <property type="term" value="C:DNA-directed RNA polymerase complex"/>
    <property type="evidence" value="ECO:0000314"/>
    <property type="project" value="UniProtKB"/>
</dbReference>
<dbReference type="GO" id="GO:0003677">
    <property type="term" value="F:DNA binding"/>
    <property type="evidence" value="ECO:0007669"/>
    <property type="project" value="InterPro"/>
</dbReference>
<dbReference type="GO" id="GO:0003899">
    <property type="term" value="F:DNA-directed RNA polymerase activity"/>
    <property type="evidence" value="ECO:0007669"/>
    <property type="project" value="UniProtKB-UniRule"/>
</dbReference>
<dbReference type="GO" id="GO:0008270">
    <property type="term" value="F:zinc ion binding"/>
    <property type="evidence" value="ECO:0007669"/>
    <property type="project" value="UniProtKB-UniRule"/>
</dbReference>
<dbReference type="GO" id="GO:0006351">
    <property type="term" value="P:DNA-templated transcription"/>
    <property type="evidence" value="ECO:0007669"/>
    <property type="project" value="UniProtKB-UniRule"/>
</dbReference>
<dbReference type="Gene3D" id="2.20.28.30">
    <property type="entry name" value="RNA polymerase ii, chain L"/>
    <property type="match status" value="1"/>
</dbReference>
<dbReference type="HAMAP" id="MF_00615">
    <property type="entry name" value="RNApol_arch_Rpo12"/>
    <property type="match status" value="1"/>
</dbReference>
<dbReference type="InterPro" id="IPR006591">
    <property type="entry name" value="RNAP_P/RPABC4"/>
</dbReference>
<dbReference type="InterPro" id="IPR029040">
    <property type="entry name" value="RPABC4/Spt4"/>
</dbReference>
<dbReference type="InterPro" id="IPR023464">
    <property type="entry name" value="Rpo12"/>
</dbReference>
<dbReference type="NCBIfam" id="NF001604">
    <property type="entry name" value="PRK00398.1-1"/>
    <property type="match status" value="1"/>
</dbReference>
<dbReference type="SMART" id="SM00659">
    <property type="entry name" value="RPOLCX"/>
    <property type="match status" value="1"/>
</dbReference>
<dbReference type="SUPFAM" id="SSF63393">
    <property type="entry name" value="RNA polymerase subunits"/>
    <property type="match status" value="1"/>
</dbReference>
<sequence>MAVYRCGKCWKTFTDEQLKVLPGVRCPYCGYKIIFMVRKPTIKIVKAI</sequence>
<organism>
    <name type="scientific">Saccharolobus shibatae (strain ATCC 51178 / DSM 5389 / JCM 8931 / NBRC 15437 / B12)</name>
    <name type="common">Sulfolobus shibatae</name>
    <dbReference type="NCBI Taxonomy" id="523848"/>
    <lineage>
        <taxon>Archaea</taxon>
        <taxon>Thermoproteota</taxon>
        <taxon>Thermoprotei</taxon>
        <taxon>Sulfolobales</taxon>
        <taxon>Sulfolobaceae</taxon>
        <taxon>Saccharolobus</taxon>
    </lineage>
</organism>
<name>RPO12_SACSH</name>
<gene>
    <name evidence="1 5" type="primary">rpo12</name>
    <name evidence="1" type="synonym">rpoP</name>
    <name evidence="6" type="ORF">J5U23_02993</name>
</gene>
<keyword id="KW-0002">3D-structure</keyword>
<keyword id="KW-0963">Cytoplasm</keyword>
<keyword id="KW-0240">DNA-directed RNA polymerase</keyword>
<keyword id="KW-0479">Metal-binding</keyword>
<keyword id="KW-0548">Nucleotidyltransferase</keyword>
<keyword id="KW-0804">Transcription</keyword>
<keyword id="KW-0808">Transferase</keyword>
<keyword id="KW-0862">Zinc</keyword>
<evidence type="ECO:0000255" key="1">
    <source>
        <dbReference type="HAMAP-Rule" id="MF_00615"/>
    </source>
</evidence>
<evidence type="ECO:0000269" key="2">
    <source>
    </source>
</evidence>
<evidence type="ECO:0000269" key="3">
    <source>
    </source>
</evidence>
<evidence type="ECO:0000269" key="4">
    <source>
    </source>
</evidence>
<evidence type="ECO:0000303" key="5">
    <source>
    </source>
</evidence>
<evidence type="ECO:0000312" key="6">
    <source>
        <dbReference type="EMBL" id="QXJ30102.1"/>
    </source>
</evidence>
<evidence type="ECO:0007744" key="7">
    <source>
        <dbReference type="PDB" id="2WAQ"/>
    </source>
</evidence>
<evidence type="ECO:0007744" key="8">
    <source>
        <dbReference type="PDB" id="2WB1"/>
    </source>
</evidence>
<evidence type="ECO:0007744" key="9">
    <source>
        <dbReference type="PDB" id="2Y0S"/>
    </source>
</evidence>
<evidence type="ECO:0007744" key="10">
    <source>
        <dbReference type="PDB" id="4AYB"/>
    </source>
</evidence>
<evidence type="ECO:0007744" key="11">
    <source>
        <dbReference type="PDB" id="4V8S"/>
    </source>
</evidence>
<evidence type="ECO:0007829" key="12">
    <source>
        <dbReference type="PDB" id="4AYB"/>
    </source>
</evidence>
<protein>
    <recommendedName>
        <fullName evidence="1 5">DNA-directed RNA polymerase subunit Rpo12</fullName>
        <ecNumber evidence="1">2.7.7.6</ecNumber>
    </recommendedName>
    <alternativeName>
        <fullName evidence="1">DNA-directed RNA polymerase subunit P</fullName>
    </alternativeName>
</protein>